<feature type="signal peptide" evidence="1">
    <location>
        <begin position="1"/>
        <end position="36"/>
    </location>
</feature>
<feature type="chain" id="PRO_0000272666" description="Immunodominant staphylococcal antigen B">
    <location>
        <begin position="37"/>
        <end position="175"/>
    </location>
</feature>
<protein>
    <recommendedName>
        <fullName>Immunodominant staphylococcal antigen B</fullName>
    </recommendedName>
</protein>
<name>ISAB_STAAM</name>
<sequence>MNKTSKVCVAATLALGTLIGVTVVENSAPTSKQAQAAITPYYTYNGYIGNNANFILDKNFINAIKYDNVKFNGIKLAKTNTIKKVEKYDQTFKGVSAKGNEASQLQFVVKNNISLKDIQKAYGKDLKKENGKTKEADSGIFYYQNAKKTLGIWFVVDHNRVVEVTVGHTPYKTSK</sequence>
<reference key="1">
    <citation type="journal article" date="2001" name="Lancet">
        <title>Whole genome sequencing of meticillin-resistant Staphylococcus aureus.</title>
        <authorList>
            <person name="Kuroda M."/>
            <person name="Ohta T."/>
            <person name="Uchiyama I."/>
            <person name="Baba T."/>
            <person name="Yuzawa H."/>
            <person name="Kobayashi I."/>
            <person name="Cui L."/>
            <person name="Oguchi A."/>
            <person name="Aoki K."/>
            <person name="Nagai Y."/>
            <person name="Lian J.-Q."/>
            <person name="Ito T."/>
            <person name="Kanamori M."/>
            <person name="Matsumaru H."/>
            <person name="Maruyama A."/>
            <person name="Murakami H."/>
            <person name="Hosoyama A."/>
            <person name="Mizutani-Ui Y."/>
            <person name="Takahashi N.K."/>
            <person name="Sawano T."/>
            <person name="Inoue R."/>
            <person name="Kaito C."/>
            <person name="Sekimizu K."/>
            <person name="Hirakawa H."/>
            <person name="Kuhara S."/>
            <person name="Goto S."/>
            <person name="Yabuzaki J."/>
            <person name="Kanehisa M."/>
            <person name="Yamashita A."/>
            <person name="Oshima K."/>
            <person name="Furuya K."/>
            <person name="Yoshino C."/>
            <person name="Shiba T."/>
            <person name="Hattori M."/>
            <person name="Ogasawara N."/>
            <person name="Hayashi H."/>
            <person name="Hiramatsu K."/>
        </authorList>
    </citation>
    <scope>NUCLEOTIDE SEQUENCE [LARGE SCALE GENOMIC DNA]</scope>
    <source>
        <strain>Mu50 / ATCC 700699</strain>
    </source>
</reference>
<organism>
    <name type="scientific">Staphylococcus aureus (strain Mu50 / ATCC 700699)</name>
    <dbReference type="NCBI Taxonomy" id="158878"/>
    <lineage>
        <taxon>Bacteria</taxon>
        <taxon>Bacillati</taxon>
        <taxon>Bacillota</taxon>
        <taxon>Bacilli</taxon>
        <taxon>Bacillales</taxon>
        <taxon>Staphylococcaceae</taxon>
        <taxon>Staphylococcus</taxon>
    </lineage>
</organism>
<gene>
    <name type="primary">isaB</name>
    <name type="ordered locus">SAV2638</name>
</gene>
<dbReference type="EMBL" id="BA000017">
    <property type="protein sequence ID" value="BAB58800.1"/>
    <property type="molecule type" value="Genomic_DNA"/>
</dbReference>
<dbReference type="RefSeq" id="WP_001044560.1">
    <property type="nucleotide sequence ID" value="NC_002758.2"/>
</dbReference>
<dbReference type="SMR" id="Q7A2K6"/>
<dbReference type="KEGG" id="sav:SAV2638"/>
<dbReference type="HOGENOM" id="CLU_119552_0_0_9"/>
<dbReference type="Proteomes" id="UP000002481">
    <property type="component" value="Chromosome"/>
</dbReference>
<dbReference type="GO" id="GO:0005576">
    <property type="term" value="C:extracellular region"/>
    <property type="evidence" value="ECO:0007669"/>
    <property type="project" value="UniProtKB-SubCell"/>
</dbReference>
<dbReference type="NCBIfam" id="NF047686">
    <property type="entry name" value="IsaB_fam"/>
    <property type="match status" value="1"/>
</dbReference>
<comment type="subcellular location">
    <subcellularLocation>
        <location evidence="1">Secreted</location>
    </subcellularLocation>
</comment>
<comment type="similarity">
    <text evidence="2">Belongs to the IsaB family.</text>
</comment>
<accession>Q7A2K6</accession>
<evidence type="ECO:0000250" key="1"/>
<evidence type="ECO:0000305" key="2"/>
<proteinExistence type="inferred from homology"/>
<keyword id="KW-0964">Secreted</keyword>
<keyword id="KW-0732">Signal</keyword>